<protein>
    <recommendedName>
        <fullName>6-phospho-alpha-glucosidase</fullName>
        <ecNumber>3.2.1.-</ecNumber>
    </recommendedName>
</protein>
<evidence type="ECO:0000250" key="1"/>
<evidence type="ECO:0000269" key="2">
    <source>
    </source>
</evidence>
<evidence type="ECO:0000305" key="3"/>
<sequence>MKKFSIVVAGGGSTFTPGIVLMLLENLDKFPIRQIKFYDNDAQRQEVIAKACDIIIKEKAPDINFVYTTDPETAFTDIDFVMAHIRVGKYAMREKDEKIPLRHGVLGQETCGPGGISYGMRSIGGVIELVDYMEKYSPNAWMLNYSNPAAIVAEATRRLRPNSKILNICDMPIGIEIRMAEMLGLKSRKDMVIRYFGLNHFGWWTDIRDKKGNDLMPALREKVAKIGYNVEIEGENTEASWNDTFTKARDVFAIDPTTMPNTYLKYYFFPDYVVEHSNPNHTRANEVMEGREKFVFGECRAIAEKGTAKDSKLHVDDHASYIVDLARAIAYDTKERMLLIVENDGAISNFDPTAMVEVPCIVGSNGPEKIVQGKIPQFQKGLMEQQVSVEKLTVEAWMEGSYQKLWQAITLSRTVPSASVAKAILDDLIEANKDFWPVLK</sequence>
<name>PAGL_LEPBD</name>
<reference key="1">
    <citation type="journal article" date="2009" name="Stand. Genomic Sci.">
        <title>Complete genome sequence of Leptotrichia buccalis type strain (C-1013-b).</title>
        <authorList>
            <person name="Ivanova N."/>
            <person name="Gronow S."/>
            <person name="Lapidus A."/>
            <person name="Copeland A."/>
            <person name="Glavina Del Rio T."/>
            <person name="Nolan M."/>
            <person name="Lucas S."/>
            <person name="Chen F."/>
            <person name="Tice H."/>
            <person name="Cheng J.F."/>
            <person name="Saunders E."/>
            <person name="Bruce D."/>
            <person name="Goodwin L."/>
            <person name="Brettin T."/>
            <person name="Detter J.C."/>
            <person name="Han C."/>
            <person name="Pitluck S."/>
            <person name="Mikhailova N."/>
            <person name="Pati A."/>
            <person name="Mavrommatis K."/>
            <person name="Chen A."/>
            <person name="Palaniappan K."/>
            <person name="Land M."/>
            <person name="Hauser L."/>
            <person name="Chang Y.J."/>
            <person name="Jeffries C.D."/>
            <person name="Chain P."/>
            <person name="Rohde C."/>
            <person name="Goker M."/>
            <person name="Bristow J."/>
            <person name="Eisen J.A."/>
            <person name="Markowitz V."/>
            <person name="Hugenholtz P."/>
            <person name="Kyrpides N.C."/>
            <person name="Klenk H.P."/>
        </authorList>
    </citation>
    <scope>NUCLEOTIDE SEQUENCE [LARGE SCALE GENOMIC DNA]</scope>
    <source>
        <strain>ATCC 14201 / DSM 1135 / JCM 12969 / NCTC 10249 / C-1013-b</strain>
    </source>
</reference>
<reference key="2">
    <citation type="journal article" date="2012" name="Mol. Oral. Microbiol.">
        <title>Metabolism of sugars by genetically diverse species of oral Leptotrichia.</title>
        <authorList>
            <person name="Thompson J."/>
            <person name="Pikis A."/>
        </authorList>
    </citation>
    <scope>PROTEIN SEQUENCE OF 1-25</scope>
    <scope>FUNCTION</scope>
    <scope>CATALYTIC ACTIVITY</scope>
    <scope>SUBSTRATE SPECIFICITY</scope>
    <scope>COFACTOR</scope>
    <scope>PH DEPENDENCE</scope>
    <scope>INDUCTION</scope>
    <scope>SUBUNIT</scope>
    <source>
        <strain>ATCC 14201 / DSM 1135 / JCM 12969 / NCTC 10249 / C-1013-b</strain>
    </source>
</reference>
<gene>
    <name type="primary">pagL</name>
    <name type="ordered locus">Lebu_1525</name>
</gene>
<feature type="chain" id="PRO_0000415959" description="6-phospho-alpha-glucosidase">
    <location>
        <begin position="1"/>
        <end position="440"/>
    </location>
</feature>
<feature type="active site" description="Proton donor" evidence="1">
    <location>
        <position position="170"/>
    </location>
</feature>
<feature type="active site" description="Proton acceptor" evidence="1">
    <location>
        <position position="263"/>
    </location>
</feature>
<feature type="binding site" evidence="1">
    <location>
        <begin position="4"/>
        <end position="70"/>
    </location>
    <ligand>
        <name>NAD(+)</name>
        <dbReference type="ChEBI" id="CHEBI:57540"/>
    </ligand>
</feature>
<feature type="binding site" evidence="1">
    <location>
        <position position="93"/>
    </location>
    <ligand>
        <name>substrate</name>
    </ligand>
</feature>
<feature type="binding site" evidence="1">
    <location>
        <position position="147"/>
    </location>
    <ligand>
        <name>substrate</name>
    </ligand>
</feature>
<feature type="binding site" evidence="1">
    <location>
        <position position="169"/>
    </location>
    <ligand>
        <name>Mn(2+)</name>
        <dbReference type="ChEBI" id="CHEBI:29035"/>
    </ligand>
</feature>
<feature type="binding site" evidence="1">
    <location>
        <position position="200"/>
    </location>
    <ligand>
        <name>Mn(2+)</name>
        <dbReference type="ChEBI" id="CHEBI:29035"/>
    </ligand>
</feature>
<feature type="binding site" evidence="1">
    <location>
        <position position="283"/>
    </location>
    <ligand>
        <name>substrate</name>
    </ligand>
</feature>
<feature type="site" description="Increases basicity of active site Tyr" evidence="1">
    <location>
        <position position="109"/>
    </location>
</feature>
<dbReference type="EC" id="3.2.1.-"/>
<dbReference type="EMBL" id="CP001685">
    <property type="protein sequence ID" value="ACV39398.1"/>
    <property type="molecule type" value="Genomic_DNA"/>
</dbReference>
<dbReference type="RefSeq" id="WP_015769739.1">
    <property type="nucleotide sequence ID" value="NC_013192.1"/>
</dbReference>
<dbReference type="SMR" id="C7NB67"/>
<dbReference type="STRING" id="523794.Lebu_1525"/>
<dbReference type="CAZy" id="GH4">
    <property type="family name" value="Glycoside Hydrolase Family 4"/>
</dbReference>
<dbReference type="KEGG" id="lba:Lebu_1525"/>
<dbReference type="eggNOG" id="COG1486">
    <property type="taxonomic scope" value="Bacteria"/>
</dbReference>
<dbReference type="HOGENOM" id="CLU_045951_2_0_0"/>
<dbReference type="OrthoDB" id="9808275at2"/>
<dbReference type="UniPathway" id="UPA01004"/>
<dbReference type="Proteomes" id="UP000001910">
    <property type="component" value="Chromosome"/>
</dbReference>
<dbReference type="GO" id="GO:0004553">
    <property type="term" value="F:hydrolase activity, hydrolyzing O-glycosyl compounds"/>
    <property type="evidence" value="ECO:0007669"/>
    <property type="project" value="InterPro"/>
</dbReference>
<dbReference type="GO" id="GO:0046872">
    <property type="term" value="F:metal ion binding"/>
    <property type="evidence" value="ECO:0007669"/>
    <property type="project" value="UniProtKB-KW"/>
</dbReference>
<dbReference type="GO" id="GO:0016616">
    <property type="term" value="F:oxidoreductase activity, acting on the CH-OH group of donors, NAD or NADP as acceptor"/>
    <property type="evidence" value="ECO:0007669"/>
    <property type="project" value="InterPro"/>
</dbReference>
<dbReference type="GO" id="GO:0005975">
    <property type="term" value="P:carbohydrate metabolic process"/>
    <property type="evidence" value="ECO:0007669"/>
    <property type="project" value="InterPro"/>
</dbReference>
<dbReference type="CDD" id="cd05298">
    <property type="entry name" value="GH4_GlvA_pagL_like"/>
    <property type="match status" value="1"/>
</dbReference>
<dbReference type="Gene3D" id="3.90.110.10">
    <property type="entry name" value="Lactate dehydrogenase/glycoside hydrolase, family 4, C-terminal"/>
    <property type="match status" value="1"/>
</dbReference>
<dbReference type="Gene3D" id="3.40.50.720">
    <property type="entry name" value="NAD(P)-binding Rossmann-like Domain"/>
    <property type="match status" value="1"/>
</dbReference>
<dbReference type="InterPro" id="IPR019802">
    <property type="entry name" value="GlycHydrolase_4_CS"/>
</dbReference>
<dbReference type="InterPro" id="IPR001088">
    <property type="entry name" value="Glyco_hydro_4"/>
</dbReference>
<dbReference type="InterPro" id="IPR022616">
    <property type="entry name" value="Glyco_hydro_4_C"/>
</dbReference>
<dbReference type="InterPro" id="IPR015955">
    <property type="entry name" value="Lactate_DH/Glyco_Ohase_4_C"/>
</dbReference>
<dbReference type="InterPro" id="IPR036291">
    <property type="entry name" value="NAD(P)-bd_dom_sf"/>
</dbReference>
<dbReference type="PANTHER" id="PTHR32092">
    <property type="entry name" value="6-PHOSPHO-BETA-GLUCOSIDASE-RELATED"/>
    <property type="match status" value="1"/>
</dbReference>
<dbReference type="PANTHER" id="PTHR32092:SF14">
    <property type="entry name" value="MALTOSE-6'-PHOSPHATE GLUCOSIDASE"/>
    <property type="match status" value="1"/>
</dbReference>
<dbReference type="Pfam" id="PF02056">
    <property type="entry name" value="Glyco_hydro_4"/>
    <property type="match status" value="1"/>
</dbReference>
<dbReference type="Pfam" id="PF11975">
    <property type="entry name" value="Glyco_hydro_4C"/>
    <property type="match status" value="1"/>
</dbReference>
<dbReference type="PRINTS" id="PR00732">
    <property type="entry name" value="GLHYDRLASE4"/>
</dbReference>
<dbReference type="SUPFAM" id="SSF56327">
    <property type="entry name" value="LDH C-terminal domain-like"/>
    <property type="match status" value="1"/>
</dbReference>
<dbReference type="SUPFAM" id="SSF51735">
    <property type="entry name" value="NAD(P)-binding Rossmann-fold domains"/>
    <property type="match status" value="1"/>
</dbReference>
<dbReference type="PROSITE" id="PS01324">
    <property type="entry name" value="GLYCOSYL_HYDROL_F4"/>
    <property type="match status" value="1"/>
</dbReference>
<comment type="function">
    <text evidence="2">In vitro, readily hydrolyzes p-nitrophenyl-alpha-D-glucopyranoside 6-phosphate (pNPalphaG6P), a chromogenic analog of the phosphorylated isomers of sucrose. In vivo, is probably involved in the degradation of the 6-phosphate derivatives of the sucrose isomers trehalulose, turanose, maltulose and palatinose, catalyzing their hydrolysis into glucose 6-phosphate (G6P) and fructose, which allows the bacterium to use these sugars as energy sources for growth. Is not able to hydrolyze the C2 or C4 chromogenic stereomers (i.e. pNPalpha-mannopyranoside-6P and pNPalpha-galactopyranoside-6P, respectively).</text>
</comment>
<comment type="cofactor">
    <cofactor evidence="2">
        <name>NAD(+)</name>
        <dbReference type="ChEBI" id="CHEBI:57540"/>
    </cofactor>
    <text evidence="2">Binds 1 NAD(+) per subunit.</text>
</comment>
<comment type="cofactor">
    <cofactor evidence="2">
        <name>Mn(2+)</name>
        <dbReference type="ChEBI" id="CHEBI:29035"/>
    </cofactor>
    <text evidence="2">Binds 1 Mn(2+) ion per subunit.</text>
</comment>
<comment type="biophysicochemical properties">
    <phDependence>
        <text evidence="2">Optimum pH is 6.9-7.3.</text>
    </phDependence>
</comment>
<comment type="pathway">
    <text>Glycan degradation; palatinose degradation.</text>
</comment>
<comment type="subunit">
    <text evidence="2">Homodimer.</text>
</comment>
<comment type="induction">
    <text evidence="2">Induced by growth on the sucrose isomers trehalulose, turanose, maltulose and palatinose.</text>
</comment>
<comment type="similarity">
    <text evidence="3">Belongs to the glycosyl hydrolase 4 family.</text>
</comment>
<accession>C7NB67</accession>
<keyword id="KW-0119">Carbohydrate metabolism</keyword>
<keyword id="KW-0903">Direct protein sequencing</keyword>
<keyword id="KW-0326">Glycosidase</keyword>
<keyword id="KW-0378">Hydrolase</keyword>
<keyword id="KW-0464">Manganese</keyword>
<keyword id="KW-0479">Metal-binding</keyword>
<keyword id="KW-0520">NAD</keyword>
<organism>
    <name type="scientific">Leptotrichia buccalis (strain ATCC 14201 / DSM 1135 / JCM 12969 / NCTC 10249 / C-1013-b)</name>
    <dbReference type="NCBI Taxonomy" id="523794"/>
    <lineage>
        <taxon>Bacteria</taxon>
        <taxon>Fusobacteriati</taxon>
        <taxon>Fusobacteriota</taxon>
        <taxon>Fusobacteriia</taxon>
        <taxon>Fusobacteriales</taxon>
        <taxon>Leptotrichiaceae</taxon>
        <taxon>Leptotrichia</taxon>
    </lineage>
</organism>
<proteinExistence type="evidence at protein level"/>